<evidence type="ECO:0000250" key="1"/>
<evidence type="ECO:0000269" key="2">
    <source>
    </source>
</evidence>
<evidence type="ECO:0000305" key="3"/>
<reference key="1">
    <citation type="journal article" date="2008" name="Planta">
        <title>Molecular cloning and functional characterization of alpha-humulene synthase, a possible key enzyme of zerumbone biosynthesis in shampoo ginger (Zingiber zerumbet Smith).</title>
        <authorList>
            <person name="Yu F.N."/>
            <person name="Okamoto S."/>
            <person name="Nakasone K."/>
            <person name="Adachi K."/>
            <person name="Matsuda S."/>
            <person name="Harada H."/>
            <person name="Misawa N."/>
            <person name="Utsumi R."/>
        </authorList>
    </citation>
    <scope>NUCLEOTIDE SEQUENCE [GENOMIC DNA / MRNA]</scope>
    <scope>FUNCTION</scope>
    <scope>CATALYTIC ACTIVITY</scope>
    <scope>TISSUE SPECIFICITY</scope>
    <scope>INDUCTION</scope>
</reference>
<keyword id="KW-0456">Lyase</keyword>
<keyword id="KW-0460">Magnesium</keyword>
<keyword id="KW-0479">Metal-binding</keyword>
<dbReference type="EC" id="4.2.3.104"/>
<dbReference type="EMBL" id="AB247331">
    <property type="protein sequence ID" value="BAG12020.1"/>
    <property type="molecule type" value="mRNA"/>
</dbReference>
<dbReference type="EMBL" id="AB263736">
    <property type="protein sequence ID" value="BAG12315.1"/>
    <property type="molecule type" value="Genomic_DNA"/>
</dbReference>
<dbReference type="SMR" id="B1B1U3"/>
<dbReference type="KEGG" id="ag:BAG12020"/>
<dbReference type="BioCyc" id="MetaCyc:MONOMER-14875"/>
<dbReference type="BRENDA" id="4.2.3.104">
    <property type="organism ID" value="12510"/>
</dbReference>
<dbReference type="GO" id="GO:0080017">
    <property type="term" value="F:alpha-humulene synthase activity"/>
    <property type="evidence" value="ECO:0007669"/>
    <property type="project" value="UniProtKB-EC"/>
</dbReference>
<dbReference type="GO" id="GO:0000287">
    <property type="term" value="F:magnesium ion binding"/>
    <property type="evidence" value="ECO:0007669"/>
    <property type="project" value="InterPro"/>
</dbReference>
<dbReference type="GO" id="GO:0016102">
    <property type="term" value="P:diterpenoid biosynthetic process"/>
    <property type="evidence" value="ECO:0007669"/>
    <property type="project" value="InterPro"/>
</dbReference>
<dbReference type="CDD" id="cd00684">
    <property type="entry name" value="Terpene_cyclase_plant_C1"/>
    <property type="match status" value="1"/>
</dbReference>
<dbReference type="FunFam" id="1.10.600.10:FF:000007">
    <property type="entry name" value="Isoprene synthase, chloroplastic"/>
    <property type="match status" value="1"/>
</dbReference>
<dbReference type="FunFam" id="1.50.10.130:FF:000001">
    <property type="entry name" value="Isoprene synthase, chloroplastic"/>
    <property type="match status" value="1"/>
</dbReference>
<dbReference type="Gene3D" id="1.10.600.10">
    <property type="entry name" value="Farnesyl Diphosphate Synthase"/>
    <property type="match status" value="1"/>
</dbReference>
<dbReference type="Gene3D" id="1.50.10.130">
    <property type="entry name" value="Terpene synthase, N-terminal domain"/>
    <property type="match status" value="1"/>
</dbReference>
<dbReference type="InterPro" id="IPR008949">
    <property type="entry name" value="Isoprenoid_synthase_dom_sf"/>
</dbReference>
<dbReference type="InterPro" id="IPR034741">
    <property type="entry name" value="Terpene_cyclase-like_1_C"/>
</dbReference>
<dbReference type="InterPro" id="IPR044814">
    <property type="entry name" value="Terpene_cyclase_plant_C1"/>
</dbReference>
<dbReference type="InterPro" id="IPR001906">
    <property type="entry name" value="Terpene_synth_N"/>
</dbReference>
<dbReference type="InterPro" id="IPR036965">
    <property type="entry name" value="Terpene_synth_N_sf"/>
</dbReference>
<dbReference type="InterPro" id="IPR050148">
    <property type="entry name" value="Terpene_synthase-like"/>
</dbReference>
<dbReference type="InterPro" id="IPR005630">
    <property type="entry name" value="Terpene_synthase_metal-bd"/>
</dbReference>
<dbReference type="InterPro" id="IPR008930">
    <property type="entry name" value="Terpenoid_cyclase/PrenylTrfase"/>
</dbReference>
<dbReference type="PANTHER" id="PTHR31225:SF93">
    <property type="entry name" value="ALPHA-HUMULENE_(-)-(E)-BETA-CARYOPHYLLENE SYNTHASE"/>
    <property type="match status" value="1"/>
</dbReference>
<dbReference type="PANTHER" id="PTHR31225">
    <property type="entry name" value="OS04G0344100 PROTEIN-RELATED"/>
    <property type="match status" value="1"/>
</dbReference>
<dbReference type="Pfam" id="PF01397">
    <property type="entry name" value="Terpene_synth"/>
    <property type="match status" value="1"/>
</dbReference>
<dbReference type="Pfam" id="PF03936">
    <property type="entry name" value="Terpene_synth_C"/>
    <property type="match status" value="1"/>
</dbReference>
<dbReference type="SFLD" id="SFLDS00005">
    <property type="entry name" value="Isoprenoid_Synthase_Type_I"/>
    <property type="match status" value="1"/>
</dbReference>
<dbReference type="SFLD" id="SFLDG01019">
    <property type="entry name" value="Terpene_Cyclase_Like_1_C_Termi"/>
    <property type="match status" value="1"/>
</dbReference>
<dbReference type="SUPFAM" id="SSF48239">
    <property type="entry name" value="Terpenoid cyclases/Protein prenyltransferases"/>
    <property type="match status" value="1"/>
</dbReference>
<dbReference type="SUPFAM" id="SSF48576">
    <property type="entry name" value="Terpenoid synthases"/>
    <property type="match status" value="1"/>
</dbReference>
<feature type="chain" id="PRO_0000418755" description="Alpha-humulene synthase">
    <location>
        <begin position="1"/>
        <end position="548"/>
    </location>
</feature>
<feature type="short sequence motif" description="DDXXD motif">
    <location>
        <begin position="302"/>
        <end position="306"/>
    </location>
</feature>
<feature type="binding site" evidence="1">
    <location>
        <position position="302"/>
    </location>
    <ligand>
        <name>Mg(2+)</name>
        <dbReference type="ChEBI" id="CHEBI:18420"/>
        <label>1</label>
    </ligand>
</feature>
<feature type="binding site" evidence="1">
    <location>
        <position position="302"/>
    </location>
    <ligand>
        <name>Mg(2+)</name>
        <dbReference type="ChEBI" id="CHEBI:18420"/>
        <label>2</label>
    </ligand>
</feature>
<feature type="binding site" evidence="1">
    <location>
        <position position="306"/>
    </location>
    <ligand>
        <name>Mg(2+)</name>
        <dbReference type="ChEBI" id="CHEBI:18420"/>
        <label>1</label>
    </ligand>
</feature>
<feature type="binding site" evidence="1">
    <location>
        <position position="306"/>
    </location>
    <ligand>
        <name>Mg(2+)</name>
        <dbReference type="ChEBI" id="CHEBI:18420"/>
        <label>2</label>
    </ligand>
</feature>
<feature type="binding site" evidence="1">
    <location>
        <position position="453"/>
    </location>
    <ligand>
        <name>Mg(2+)</name>
        <dbReference type="ChEBI" id="CHEBI:18420"/>
        <label>3</label>
    </ligand>
</feature>
<protein>
    <recommendedName>
        <fullName>Alpha-humulene synthase</fullName>
        <ecNumber>4.2.3.104</ecNumber>
    </recommendedName>
</protein>
<gene>
    <name type="primary">ZSS1</name>
</gene>
<name>ZSS1_ZINZE</name>
<sequence length="548" mass="64518">MERQSMALVGDKEEIIRKSFEYHPTVWGDYFIRNYSCLPLEKECMIKRVEELKDRVRNLFEETHDVLQIMILVDSIQLLGLDYHFEKEITAALRLIYEADVENYGLYEVSLRFRLLRQHGYNLSPDVFNKFKDDKGRFLPTLNGDAKGLLNLYNAAYLGTHEETILDEAISFTKCQLESLLGELEQPLAIEVSLFLETPLYRRTRRLLVRKYIPIYQEKVMRNDTILELAKLDFNLLQSLHQEEVKKITIWWNDLALTKSLKFARDRVVECYYWIVAVYFEPQYSRARVITSKAISLMSIMDDIYDNYSTLEESRLLTEAIERWEPQAVDCVPEYLKDFYLKLLKTYKDFEDELEPNEKYRIPYLQEEIKVLSRAYFQEAKWGVERYVPALEEHLLVSLITAGYFAVACASYVGLGEDATKETFEWVASSPKILKSCSIHCRLMDDITSHQREQERDHFASTVESYMKEHGTSAKVACEKLQVMVEQKWKDLNEECLRPTQVARPLIEIILNLSRAMEDIYKHKDTYTNSNTRMKDNVSLIFVESFLI</sequence>
<accession>B1B1U3</accession>
<proteinExistence type="evidence at protein level"/>
<comment type="function">
    <text evidence="2">Catalyzes the formation of alpha-humulene in the first step of zerumbone biosynthesis, a highly promising multi-anticancer agent. Also mediates formation of beta-caryophyllene at a much lower level.</text>
</comment>
<comment type="catalytic activity">
    <reaction evidence="2">
        <text>(2E,6E)-farnesyl diphosphate = alpha-humulene + diphosphate</text>
        <dbReference type="Rhea" id="RHEA:31895"/>
        <dbReference type="ChEBI" id="CHEBI:5768"/>
        <dbReference type="ChEBI" id="CHEBI:33019"/>
        <dbReference type="ChEBI" id="CHEBI:175763"/>
        <dbReference type="EC" id="4.2.3.104"/>
    </reaction>
</comment>
<comment type="tissue specificity">
    <text evidence="2">Mostly expressed in rhizomes.</text>
</comment>
<comment type="induction">
    <text evidence="2">Up-regulated in leaves and rhizomes following treatment with methyl jasmonate (meJA).</text>
</comment>
<comment type="similarity">
    <text evidence="3">Belongs to the terpene synthase family.</text>
</comment>
<organism>
    <name type="scientific">Zingiber zerumbet</name>
    <name type="common">Shampoo ginger</name>
    <name type="synonym">Amomum zerumbet</name>
    <dbReference type="NCBI Taxonomy" id="311405"/>
    <lineage>
        <taxon>Eukaryota</taxon>
        <taxon>Viridiplantae</taxon>
        <taxon>Streptophyta</taxon>
        <taxon>Embryophyta</taxon>
        <taxon>Tracheophyta</taxon>
        <taxon>Spermatophyta</taxon>
        <taxon>Magnoliopsida</taxon>
        <taxon>Liliopsida</taxon>
        <taxon>Zingiberales</taxon>
        <taxon>Zingiberaceae</taxon>
        <taxon>Zingiber</taxon>
    </lineage>
</organism>